<reference key="1">
    <citation type="journal article" date="2003" name="Gene">
        <title>Translational machinery of channel catfish: II. Complementary DNA and expression of the complete set of 47 60S ribosomal proteins.</title>
        <authorList>
            <person name="Patterson A.P."/>
            <person name="Karsi A."/>
            <person name="Feng J."/>
            <person name="Liu Z.J."/>
        </authorList>
    </citation>
    <scope>NUCLEOTIDE SEQUENCE [MRNA]</scope>
</reference>
<comment type="function">
    <text evidence="1">Component of the large ribosomal subunit. The ribosome is a large ribonucleoprotein complex responsible for the synthesis of proteins in the cell.</text>
</comment>
<comment type="subunit">
    <text evidence="1">Component of the large ribosomal subunit.</text>
</comment>
<comment type="subcellular location">
    <subcellularLocation>
        <location evidence="1">Cytoplasm</location>
    </subcellularLocation>
</comment>
<comment type="similarity">
    <text evidence="2">Belongs to the eukaryotic ribosomal protein eL32 family.</text>
</comment>
<proteinExistence type="evidence at transcript level"/>
<feature type="chain" id="PRO_0000131119" description="Large ribosomal subunit protein eL32">
    <location>
        <begin position="1"/>
        <end position="135"/>
    </location>
</feature>
<evidence type="ECO:0000250" key="1">
    <source>
        <dbReference type="UniProtKB" id="P62910"/>
    </source>
</evidence>
<evidence type="ECO:0000305" key="2"/>
<gene>
    <name type="primary">rpl32</name>
</gene>
<organism>
    <name type="scientific">Ictalurus punctatus</name>
    <name type="common">Channel catfish</name>
    <name type="synonym">Silurus punctatus</name>
    <dbReference type="NCBI Taxonomy" id="7998"/>
    <lineage>
        <taxon>Eukaryota</taxon>
        <taxon>Metazoa</taxon>
        <taxon>Chordata</taxon>
        <taxon>Craniata</taxon>
        <taxon>Vertebrata</taxon>
        <taxon>Euteleostomi</taxon>
        <taxon>Actinopterygii</taxon>
        <taxon>Neopterygii</taxon>
        <taxon>Teleostei</taxon>
        <taxon>Ostariophysi</taxon>
        <taxon>Siluriformes</taxon>
        <taxon>Ictaluridae</taxon>
        <taxon>Ictalurus</taxon>
    </lineage>
</organism>
<dbReference type="EMBL" id="AF401587">
    <property type="protein sequence ID" value="AAK95159.1"/>
    <property type="molecule type" value="mRNA"/>
</dbReference>
<dbReference type="RefSeq" id="NP_001187056.1">
    <property type="nucleotide sequence ID" value="NM_001200127.1"/>
</dbReference>
<dbReference type="SMR" id="Q90YT6"/>
<dbReference type="STRING" id="7998.ENSIPUP00000012704"/>
<dbReference type="GeneID" id="100304545"/>
<dbReference type="KEGG" id="ipu:100304545"/>
<dbReference type="CTD" id="6161"/>
<dbReference type="OrthoDB" id="268693at2759"/>
<dbReference type="Proteomes" id="UP000221080">
    <property type="component" value="Chromosome 21"/>
</dbReference>
<dbReference type="GO" id="GO:0022625">
    <property type="term" value="C:cytosolic large ribosomal subunit"/>
    <property type="evidence" value="ECO:0007669"/>
    <property type="project" value="TreeGrafter"/>
</dbReference>
<dbReference type="GO" id="GO:0003735">
    <property type="term" value="F:structural constituent of ribosome"/>
    <property type="evidence" value="ECO:0007669"/>
    <property type="project" value="InterPro"/>
</dbReference>
<dbReference type="GO" id="GO:0006412">
    <property type="term" value="P:translation"/>
    <property type="evidence" value="ECO:0007669"/>
    <property type="project" value="InterPro"/>
</dbReference>
<dbReference type="CDD" id="cd00513">
    <property type="entry name" value="Ribosomal_L32_L32e"/>
    <property type="match status" value="1"/>
</dbReference>
<dbReference type="InterPro" id="IPR001515">
    <property type="entry name" value="Ribosomal_eL32"/>
</dbReference>
<dbReference type="InterPro" id="IPR018263">
    <property type="entry name" value="Ribosomal_eL32_CS"/>
</dbReference>
<dbReference type="InterPro" id="IPR036351">
    <property type="entry name" value="Ribosomal_eL32_sf"/>
</dbReference>
<dbReference type="PANTHER" id="PTHR23413">
    <property type="entry name" value="60S RIBOSOMAL PROTEIN L32 AND DNA-DIRECTED RNA POLYMERASE II, SUBUNIT N"/>
    <property type="match status" value="1"/>
</dbReference>
<dbReference type="PANTHER" id="PTHR23413:SF1">
    <property type="entry name" value="RIBOSOMAL PROTEIN L32"/>
    <property type="match status" value="1"/>
</dbReference>
<dbReference type="Pfam" id="PF01655">
    <property type="entry name" value="Ribosomal_L32e"/>
    <property type="match status" value="1"/>
</dbReference>
<dbReference type="SMART" id="SM01393">
    <property type="entry name" value="Ribosomal_L32e"/>
    <property type="match status" value="1"/>
</dbReference>
<dbReference type="SUPFAM" id="SSF52042">
    <property type="entry name" value="Ribosomal protein L32e"/>
    <property type="match status" value="1"/>
</dbReference>
<dbReference type="PROSITE" id="PS00580">
    <property type="entry name" value="RIBOSOMAL_L32E"/>
    <property type="match status" value="1"/>
</dbReference>
<keyword id="KW-0963">Cytoplasm</keyword>
<keyword id="KW-0687">Ribonucleoprotein</keyword>
<keyword id="KW-0689">Ribosomal protein</keyword>
<accession>Q90YT6</accession>
<protein>
    <recommendedName>
        <fullName evidence="2">Large ribosomal subunit protein eL32</fullName>
    </recommendedName>
    <alternativeName>
        <fullName>60S ribosomal protein L32</fullName>
    </alternativeName>
</protein>
<name>RL32_ICTPU</name>
<sequence>MAALRPLTKPKIVKKRTKKFIRHQSDRYVKIRRNWRKPRGIDNRVRSGFKGQMLMPNIGYGSNKKTKHMLPSGFKKFLVHNVKELEVLLMSNKSYCAEIAHNVSSKNRKVIVERAAQLAIKVTNPNARLRSEENE</sequence>